<accession>Q88TY1</accession>
<accession>F9URP5</accession>
<feature type="chain" id="PRO_0000185615" description="Probable D-serine dehydratase">
    <location>
        <begin position="1"/>
        <end position="436"/>
    </location>
</feature>
<feature type="modified residue" description="N6-(pyridoxal phosphate)lysine" evidence="1">
    <location>
        <position position="111"/>
    </location>
</feature>
<keyword id="KW-0456">Lyase</keyword>
<keyword id="KW-0663">Pyridoxal phosphate</keyword>
<keyword id="KW-1185">Reference proteome</keyword>
<protein>
    <recommendedName>
        <fullName evidence="1">Probable D-serine dehydratase</fullName>
        <ecNumber evidence="1">4.3.1.18</ecNumber>
    </recommendedName>
    <alternativeName>
        <fullName evidence="1">D-serine deaminase</fullName>
        <shortName evidence="1">DSD</shortName>
    </alternativeName>
</protein>
<organism>
    <name type="scientific">Lactiplantibacillus plantarum (strain ATCC BAA-793 / NCIMB 8826 / WCFS1)</name>
    <name type="common">Lactobacillus plantarum</name>
    <dbReference type="NCBI Taxonomy" id="220668"/>
    <lineage>
        <taxon>Bacteria</taxon>
        <taxon>Bacillati</taxon>
        <taxon>Bacillota</taxon>
        <taxon>Bacilli</taxon>
        <taxon>Lactobacillales</taxon>
        <taxon>Lactobacillaceae</taxon>
        <taxon>Lactiplantibacillus</taxon>
    </lineage>
</organism>
<dbReference type="EC" id="4.3.1.18" evidence="1"/>
<dbReference type="EMBL" id="AL935263">
    <property type="protein sequence ID" value="CCC79884.1"/>
    <property type="molecule type" value="Genomic_DNA"/>
</dbReference>
<dbReference type="RefSeq" id="WP_011101913.1">
    <property type="nucleotide sequence ID" value="NC_004567.2"/>
</dbReference>
<dbReference type="RefSeq" id="YP_004890398.1">
    <property type="nucleotide sequence ID" value="NC_004567.2"/>
</dbReference>
<dbReference type="SMR" id="Q88TY1"/>
<dbReference type="STRING" id="220668.lp_2776"/>
<dbReference type="EnsemblBacteria" id="CCC79884">
    <property type="protein sequence ID" value="CCC79884"/>
    <property type="gene ID" value="lp_2776"/>
</dbReference>
<dbReference type="KEGG" id="lpl:lp_2776"/>
<dbReference type="PATRIC" id="fig|220668.9.peg.2324"/>
<dbReference type="eggNOG" id="COG3048">
    <property type="taxonomic scope" value="Bacteria"/>
</dbReference>
<dbReference type="HOGENOM" id="CLU_035707_0_0_9"/>
<dbReference type="OrthoDB" id="9780546at2"/>
<dbReference type="PhylomeDB" id="Q88TY1"/>
<dbReference type="Proteomes" id="UP000000432">
    <property type="component" value="Chromosome"/>
</dbReference>
<dbReference type="GO" id="GO:0008721">
    <property type="term" value="F:D-serine ammonia-lyase activity"/>
    <property type="evidence" value="ECO:0007669"/>
    <property type="project" value="UniProtKB-EC"/>
</dbReference>
<dbReference type="GO" id="GO:0016836">
    <property type="term" value="F:hydro-lyase activity"/>
    <property type="evidence" value="ECO:0007669"/>
    <property type="project" value="UniProtKB-UniRule"/>
</dbReference>
<dbReference type="GO" id="GO:0030170">
    <property type="term" value="F:pyridoxal phosphate binding"/>
    <property type="evidence" value="ECO:0007669"/>
    <property type="project" value="InterPro"/>
</dbReference>
<dbReference type="GO" id="GO:0036088">
    <property type="term" value="P:D-serine catabolic process"/>
    <property type="evidence" value="ECO:0007669"/>
    <property type="project" value="TreeGrafter"/>
</dbReference>
<dbReference type="GO" id="GO:0009097">
    <property type="term" value="P:isoleucine biosynthetic process"/>
    <property type="evidence" value="ECO:0007669"/>
    <property type="project" value="TreeGrafter"/>
</dbReference>
<dbReference type="CDD" id="cd06447">
    <property type="entry name" value="D-Ser-dehyd"/>
    <property type="match status" value="1"/>
</dbReference>
<dbReference type="Gene3D" id="3.40.50.1100">
    <property type="match status" value="2"/>
</dbReference>
<dbReference type="HAMAP" id="MF_01030">
    <property type="entry name" value="D_Ser_dehydrat"/>
    <property type="match status" value="1"/>
</dbReference>
<dbReference type="InterPro" id="IPR011780">
    <property type="entry name" value="D_Ser_am_lyase"/>
</dbReference>
<dbReference type="InterPro" id="IPR050147">
    <property type="entry name" value="Ser/Thr_Dehydratase"/>
</dbReference>
<dbReference type="InterPro" id="IPR000634">
    <property type="entry name" value="Ser/Thr_deHydtase_PyrdxlP-BS"/>
</dbReference>
<dbReference type="InterPro" id="IPR001926">
    <property type="entry name" value="TrpB-like_PALP"/>
</dbReference>
<dbReference type="InterPro" id="IPR036052">
    <property type="entry name" value="TrpB-like_PALP_sf"/>
</dbReference>
<dbReference type="NCBIfam" id="TIGR02035">
    <property type="entry name" value="D_Ser_am_lyase"/>
    <property type="match status" value="1"/>
</dbReference>
<dbReference type="NCBIfam" id="NF002823">
    <property type="entry name" value="PRK02991.1"/>
    <property type="match status" value="1"/>
</dbReference>
<dbReference type="PANTHER" id="PTHR48078:SF9">
    <property type="entry name" value="D-SERINE DEHYDRATASE"/>
    <property type="match status" value="1"/>
</dbReference>
<dbReference type="PANTHER" id="PTHR48078">
    <property type="entry name" value="THREONINE DEHYDRATASE, MITOCHONDRIAL-RELATED"/>
    <property type="match status" value="1"/>
</dbReference>
<dbReference type="Pfam" id="PF00291">
    <property type="entry name" value="PALP"/>
    <property type="match status" value="1"/>
</dbReference>
<dbReference type="SUPFAM" id="SSF53686">
    <property type="entry name" value="Tryptophan synthase beta subunit-like PLP-dependent enzymes"/>
    <property type="match status" value="1"/>
</dbReference>
<dbReference type="PROSITE" id="PS00165">
    <property type="entry name" value="DEHYDRATASE_SER_THR"/>
    <property type="match status" value="1"/>
</dbReference>
<evidence type="ECO:0000255" key="1">
    <source>
        <dbReference type="HAMAP-Rule" id="MF_01030"/>
    </source>
</evidence>
<comment type="catalytic activity">
    <reaction evidence="1">
        <text>D-serine = pyruvate + NH4(+)</text>
        <dbReference type="Rhea" id="RHEA:13977"/>
        <dbReference type="ChEBI" id="CHEBI:15361"/>
        <dbReference type="ChEBI" id="CHEBI:28938"/>
        <dbReference type="ChEBI" id="CHEBI:35247"/>
        <dbReference type="EC" id="4.3.1.18"/>
    </reaction>
</comment>
<comment type="cofactor">
    <cofactor evidence="1">
        <name>pyridoxal 5'-phosphate</name>
        <dbReference type="ChEBI" id="CHEBI:597326"/>
    </cofactor>
</comment>
<comment type="similarity">
    <text evidence="1">Belongs to the serine/threonine dehydratase family. DsdA subfamily.</text>
</comment>
<reference key="1">
    <citation type="journal article" date="2003" name="Proc. Natl. Acad. Sci. U.S.A.">
        <title>Complete genome sequence of Lactobacillus plantarum WCFS1.</title>
        <authorList>
            <person name="Kleerebezem M."/>
            <person name="Boekhorst J."/>
            <person name="van Kranenburg R."/>
            <person name="Molenaar D."/>
            <person name="Kuipers O.P."/>
            <person name="Leer R."/>
            <person name="Tarchini R."/>
            <person name="Peters S.A."/>
            <person name="Sandbrink H.M."/>
            <person name="Fiers M.W.E.J."/>
            <person name="Stiekema W."/>
            <person name="Klein Lankhorst R.M."/>
            <person name="Bron P.A."/>
            <person name="Hoffer S.M."/>
            <person name="Nierop Groot M.N."/>
            <person name="Kerkhoven R."/>
            <person name="De Vries M."/>
            <person name="Ursing B."/>
            <person name="De Vos W.M."/>
            <person name="Siezen R.J."/>
        </authorList>
    </citation>
    <scope>NUCLEOTIDE SEQUENCE [LARGE SCALE GENOMIC DNA]</scope>
    <source>
        <strain>ATCC BAA-793 / NCIMB 8826 / WCFS1</strain>
    </source>
</reference>
<reference key="2">
    <citation type="journal article" date="2012" name="J. Bacteriol.">
        <title>Complete resequencing and reannotation of the Lactobacillus plantarum WCFS1 genome.</title>
        <authorList>
            <person name="Siezen R.J."/>
            <person name="Francke C."/>
            <person name="Renckens B."/>
            <person name="Boekhorst J."/>
            <person name="Wels M."/>
            <person name="Kleerebezem M."/>
            <person name="van Hijum S.A."/>
        </authorList>
    </citation>
    <scope>NUCLEOTIDE SEQUENCE [LARGE SCALE GENOMIC DNA]</scope>
    <scope>GENOME REANNOTATION</scope>
    <source>
        <strain>ATCC BAA-793 / NCIMB 8826 / WCFS1</strain>
    </source>
</reference>
<proteinExistence type="inferred from homology"/>
<name>SDHD_LACPL</name>
<sequence length="436" mass="47572">MDTTVMIEEHPQIKELIAKRPIVWQNPDYGKRADLPLTRADIFDAVARWERFAPFLAVAFPETAAMNGIIESPLLPLEQMKPAWEALNHQSLAGQLYLKADSQLPISGSIKSRGGIYEVLKFAEQVAMAHTDLTYMDDYSVLATAKYHELFAQYGVIVASTGNLALSVGIMAATFGFKTTVYMSHDARQWKKDKLRANGVTVEELNTDFSSVIPVARAAAAKDDHTHFVDDEGSRDLFLGYAVAGVRLQHQLKVQGIKMDAAHPVVVYLPAGVGGSPSGVAFGLKMIMGANIYPVFCEPTHVPSVTLGMMTKLNEKIAVQDIGLDGLTAADGLAVSRPSRLAGKVMRTLLLGTATFEDDDLYRYLTKLVDTEDVIVEPSAAAGFTAIAPIMAQFPTLAGKDVTHIVWATGGDMMPESERQLDYELGQKLLTKINNR</sequence>
<gene>
    <name evidence="1" type="primary">dsdA</name>
    <name type="ordered locus">lp_2776</name>
</gene>